<dbReference type="EC" id="2.1.1.109" evidence="15"/>
<dbReference type="EMBL" id="BN001304">
    <property type="status" value="NOT_ANNOTATED_CDS"/>
    <property type="molecule type" value="Genomic_DNA"/>
</dbReference>
<dbReference type="EMBL" id="AACD01000132">
    <property type="status" value="NOT_ANNOTATED_CDS"/>
    <property type="molecule type" value="Genomic_DNA"/>
</dbReference>
<dbReference type="SMR" id="P9WEP8"/>
<dbReference type="UniPathway" id="UPA00377"/>
<dbReference type="Proteomes" id="UP000000560">
    <property type="component" value="Chromosome IV"/>
</dbReference>
<dbReference type="GO" id="GO:0008171">
    <property type="term" value="F:O-methyltransferase activity"/>
    <property type="evidence" value="ECO:0007669"/>
    <property type="project" value="InterPro"/>
</dbReference>
<dbReference type="GO" id="GO:0032259">
    <property type="term" value="P:methylation"/>
    <property type="evidence" value="ECO:0007669"/>
    <property type="project" value="UniProtKB-KW"/>
</dbReference>
<dbReference type="GO" id="GO:0045461">
    <property type="term" value="P:sterigmatocystin biosynthetic process"/>
    <property type="evidence" value="ECO:0007669"/>
    <property type="project" value="UniProtKB-UniPathway"/>
</dbReference>
<dbReference type="Gene3D" id="3.40.50.150">
    <property type="entry name" value="Vaccinia Virus protein VP39"/>
    <property type="match status" value="1"/>
</dbReference>
<dbReference type="InterPro" id="IPR016461">
    <property type="entry name" value="COMT-like"/>
</dbReference>
<dbReference type="InterPro" id="IPR001077">
    <property type="entry name" value="O_MeTrfase_dom"/>
</dbReference>
<dbReference type="InterPro" id="IPR029063">
    <property type="entry name" value="SAM-dependent_MTases_sf"/>
</dbReference>
<dbReference type="PANTHER" id="PTHR43712:SF1">
    <property type="entry name" value="HYPOTHETICAL O-METHYLTRANSFERASE (EUROFUNG)-RELATED"/>
    <property type="match status" value="1"/>
</dbReference>
<dbReference type="PANTHER" id="PTHR43712">
    <property type="entry name" value="PUTATIVE (AFU_ORTHOLOGUE AFUA_4G14580)-RELATED"/>
    <property type="match status" value="1"/>
</dbReference>
<dbReference type="Pfam" id="PF00891">
    <property type="entry name" value="Methyltransf_2"/>
    <property type="match status" value="1"/>
</dbReference>
<dbReference type="SUPFAM" id="SSF53335">
    <property type="entry name" value="S-adenosyl-L-methionine-dependent methyltransferases"/>
    <property type="match status" value="1"/>
</dbReference>
<dbReference type="PROSITE" id="PS51683">
    <property type="entry name" value="SAM_OMT_II"/>
    <property type="match status" value="1"/>
</dbReference>
<accession>P9WEP8</accession>
<proteinExistence type="evidence at transcript level"/>
<keyword id="KW-0489">Methyltransferase</keyword>
<keyword id="KW-1185">Reference proteome</keyword>
<keyword id="KW-0949">S-adenosyl-L-methionine</keyword>
<keyword id="KW-0808">Transferase</keyword>
<reference key="1">
    <citation type="journal article" date="2005" name="Nature">
        <title>Sequencing of Aspergillus nidulans and comparative analysis with A. fumigatus and A. oryzae.</title>
        <authorList>
            <person name="Galagan J.E."/>
            <person name="Calvo S.E."/>
            <person name="Cuomo C."/>
            <person name="Ma L.-J."/>
            <person name="Wortman J.R."/>
            <person name="Batzoglou S."/>
            <person name="Lee S.-I."/>
            <person name="Bastuerkmen M."/>
            <person name="Spevak C.C."/>
            <person name="Clutterbuck J."/>
            <person name="Kapitonov V."/>
            <person name="Jurka J."/>
            <person name="Scazzocchio C."/>
            <person name="Farman M.L."/>
            <person name="Butler J."/>
            <person name="Purcell S."/>
            <person name="Harris S."/>
            <person name="Braus G.H."/>
            <person name="Draht O."/>
            <person name="Busch S."/>
            <person name="D'Enfert C."/>
            <person name="Bouchier C."/>
            <person name="Goldman G.H."/>
            <person name="Bell-Pedersen D."/>
            <person name="Griffiths-Jones S."/>
            <person name="Doonan J.H."/>
            <person name="Yu J."/>
            <person name="Vienken K."/>
            <person name="Pain A."/>
            <person name="Freitag M."/>
            <person name="Selker E.U."/>
            <person name="Archer D.B."/>
            <person name="Penalva M.A."/>
            <person name="Oakley B.R."/>
            <person name="Momany M."/>
            <person name="Tanaka T."/>
            <person name="Kumagai T."/>
            <person name="Asai K."/>
            <person name="Machida M."/>
            <person name="Nierman W.C."/>
            <person name="Denning D.W."/>
            <person name="Caddick M.X."/>
            <person name="Hynes M."/>
            <person name="Paoletti M."/>
            <person name="Fischer R."/>
            <person name="Miller B.L."/>
            <person name="Dyer P.S."/>
            <person name="Sachs M.S."/>
            <person name="Osmani S.A."/>
            <person name="Birren B.W."/>
        </authorList>
    </citation>
    <scope>NUCLEOTIDE SEQUENCE [LARGE SCALE GENOMIC DNA]</scope>
    <source>
        <strain>FGSC A4 / ATCC 38163 / CBS 112.46 / NRRL 194 / M139</strain>
    </source>
</reference>
<reference key="2">
    <citation type="journal article" date="2009" name="Fungal Genet. Biol.">
        <title>The 2008 update of the Aspergillus nidulans genome annotation: a community effort.</title>
        <authorList>
            <person name="Wortman J.R."/>
            <person name="Gilsenan J.M."/>
            <person name="Joardar V."/>
            <person name="Deegan J."/>
            <person name="Clutterbuck J."/>
            <person name="Andersen M.R."/>
            <person name="Archer D."/>
            <person name="Bencina M."/>
            <person name="Braus G."/>
            <person name="Coutinho P."/>
            <person name="von Dohren H."/>
            <person name="Doonan J."/>
            <person name="Driessen A.J."/>
            <person name="Durek P."/>
            <person name="Espeso E."/>
            <person name="Fekete E."/>
            <person name="Flipphi M."/>
            <person name="Estrada C.G."/>
            <person name="Geysens S."/>
            <person name="Goldman G."/>
            <person name="de Groot P.W."/>
            <person name="Hansen K."/>
            <person name="Harris S.D."/>
            <person name="Heinekamp T."/>
            <person name="Helmstaedt K."/>
            <person name="Henrissat B."/>
            <person name="Hofmann G."/>
            <person name="Homan T."/>
            <person name="Horio T."/>
            <person name="Horiuchi H."/>
            <person name="James S."/>
            <person name="Jones M."/>
            <person name="Karaffa L."/>
            <person name="Karanyi Z."/>
            <person name="Kato M."/>
            <person name="Keller N."/>
            <person name="Kelly D.E."/>
            <person name="Kiel J.A."/>
            <person name="Kim J.M."/>
            <person name="van der Klei I.J."/>
            <person name="Klis F.M."/>
            <person name="Kovalchuk A."/>
            <person name="Krasevec N."/>
            <person name="Kubicek C.P."/>
            <person name="Liu B."/>
            <person name="Maccabe A."/>
            <person name="Meyer V."/>
            <person name="Mirabito P."/>
            <person name="Miskei M."/>
            <person name="Mos M."/>
            <person name="Mullins J."/>
            <person name="Nelson D.R."/>
            <person name="Nielsen J."/>
            <person name="Oakley B.R."/>
            <person name="Osmani S.A."/>
            <person name="Pakula T."/>
            <person name="Paszewski A."/>
            <person name="Paulsen I."/>
            <person name="Pilsyk S."/>
            <person name="Pocsi I."/>
            <person name="Punt P.J."/>
            <person name="Ram A.F."/>
            <person name="Ren Q."/>
            <person name="Robellet X."/>
            <person name="Robson G."/>
            <person name="Seiboth B."/>
            <person name="van Solingen P."/>
            <person name="Specht T."/>
            <person name="Sun J."/>
            <person name="Taheri-Talesh N."/>
            <person name="Takeshita N."/>
            <person name="Ussery D."/>
            <person name="vanKuyk P.A."/>
            <person name="Visser H."/>
            <person name="van de Vondervoort P.J."/>
            <person name="de Vries R.P."/>
            <person name="Walton J."/>
            <person name="Xiang X."/>
            <person name="Xiong Y."/>
            <person name="Zeng A.P."/>
            <person name="Brandt B.W."/>
            <person name="Cornell M.J."/>
            <person name="van den Hondel C.A."/>
            <person name="Visser J."/>
            <person name="Oliver S.G."/>
            <person name="Turner G."/>
        </authorList>
    </citation>
    <scope>GENOME REANNOTATION</scope>
    <source>
        <strain>FGSC A4 / ATCC 38163 / CBS 112.46 / NRRL 194 / M139</strain>
    </source>
</reference>
<reference key="3">
    <citation type="journal article" date="1994" name="Appl. Environ. Microbiol.">
        <title>Aspergillus nidulans verA is required for production of the mycotoxin sterigmatocystin.</title>
        <authorList>
            <person name="Keller N.P."/>
            <person name="Kantz N.J."/>
            <person name="Adams T.H."/>
        </authorList>
    </citation>
    <scope>FUNCTION</scope>
    <scope>INDUCTION</scope>
</reference>
<reference key="4">
    <citation type="journal article" date="1995" name="Appl. Environ. Microbiol.">
        <title>StcS, a putative P-450 monooxygenase, is required for the conversion of versicolorin A to sterigmatocystin in Aspergillus nidulans.</title>
        <authorList>
            <person name="Keller N.P."/>
            <person name="Segner S."/>
            <person name="Bhatnagar D."/>
            <person name="Adams T.H."/>
        </authorList>
    </citation>
    <scope>FUNCTION</scope>
</reference>
<reference key="5">
    <citation type="journal article" date="1995" name="J. Bacteriol.">
        <title>Sterigmatocystin biosynthesis in Aspergillus nidulans requires a novel type I polyketide synthase.</title>
        <authorList>
            <person name="Yu J.-H."/>
            <person name="Leonard T.J."/>
        </authorList>
    </citation>
    <scope>FUNCTION</scope>
    <source>
        <strain>FGSC A4 / ATCC 38163 / CBS 112.46 / NRRL 194 / M139</strain>
    </source>
</reference>
<reference key="6">
    <citation type="journal article" date="1996" name="Appl. Environ. Microbiol.">
        <title>Aspergillus nidulans stcP encodes an O-methyltransferase that is required for sterigmatocystin biosynthesis.</title>
        <authorList>
            <person name="Kelkar H.S."/>
            <person name="Keller N.P."/>
            <person name="Adams T.H."/>
        </authorList>
    </citation>
    <scope>FUNCTION</scope>
    <scope>DISRUPTION PHENOTYPE</scope>
    <scope>PATHWAY</scope>
</reference>
<reference key="7">
    <citation type="journal article" date="1996" name="Proc. Natl. Acad. Sci. U.S.A.">
        <title>Aspergillus has distinct fatty acid synthases for primary and secondary metabolism.</title>
        <authorList>
            <person name="Brown D.W."/>
            <person name="Adams T.H."/>
            <person name="Keller N.P."/>
        </authorList>
    </citation>
    <scope>FUNCTION</scope>
</reference>
<reference key="8">
    <citation type="journal article" date="1996" name="Proc. Natl. Acad. Sci. U.S.A.">
        <title>Twenty-five coregulated transcripts define a sterigmatocystin gene cluster in Aspergillus nidulans.</title>
        <authorList>
            <person name="Brown D.W."/>
            <person name="Yu J.-H."/>
            <person name="Kelkar H.S."/>
            <person name="Fernandes M."/>
            <person name="Nesbitt T.C."/>
            <person name="Keller N.P."/>
            <person name="Adams T.H."/>
            <person name="Leonard T.J."/>
        </authorList>
    </citation>
    <scope>INDUCTION</scope>
    <scope>FUNCTION</scope>
    <scope>PATHWAY</scope>
</reference>
<reference key="9">
    <citation type="journal article" date="1997" name="J. Biol. Chem.">
        <title>Aspergillus nidulans stcL encodes a putative cytochrome P-450 monooxygenase required for bisfuran desaturation during aflatoxin/sterigmatocystin biosynthesis.</title>
        <authorList>
            <person name="Kelkar H.S."/>
            <person name="Skloss T.W."/>
            <person name="Haw J.F."/>
            <person name="Keller N.P."/>
            <person name="Adams T.H."/>
        </authorList>
    </citation>
    <scope>FUNCTION</scope>
</reference>
<reference key="10">
    <citation type="journal article" date="2000" name="Appl. Environ. Microbiol.">
        <title>Requirement of monooxygenase-mediated steps for sterigmatocystin biosynthesis by Aspergillus nidulans.</title>
        <authorList>
            <person name="Keller N.P."/>
            <person name="Watanabe C.M."/>
            <person name="Kelkar H.S."/>
            <person name="Adams T.H."/>
            <person name="Townsend C.A."/>
        </authorList>
    </citation>
    <scope>FUNCTION</scope>
</reference>
<reference key="11">
    <citation type="journal article" date="2012" name="Metabolites">
        <title>Genetics of polyketide metabolism in Aspergillus nidulans.</title>
        <authorList>
            <person name="Klejnstrup M.L."/>
            <person name="Frandsen R.J."/>
            <person name="Holm D.K."/>
            <person name="Nielsen M.T."/>
            <person name="Mortensen U.H."/>
            <person name="Larsen T.O."/>
            <person name="Nielsen J.B."/>
        </authorList>
    </citation>
    <scope>REVIEW ON STERIGMATOCYSTIN BIOSYNTHESIS</scope>
</reference>
<organism>
    <name type="scientific">Emericella nidulans (strain FGSC A4 / ATCC 38163 / CBS 112.46 / NRRL 194 / M139)</name>
    <name type="common">Aspergillus nidulans</name>
    <dbReference type="NCBI Taxonomy" id="227321"/>
    <lineage>
        <taxon>Eukaryota</taxon>
        <taxon>Fungi</taxon>
        <taxon>Dikarya</taxon>
        <taxon>Ascomycota</taxon>
        <taxon>Pezizomycotina</taxon>
        <taxon>Eurotiomycetes</taxon>
        <taxon>Eurotiomycetidae</taxon>
        <taxon>Eurotiales</taxon>
        <taxon>Aspergillaceae</taxon>
        <taxon>Aspergillus</taxon>
        <taxon>Aspergillus subgen. Nidulantes</taxon>
    </lineage>
</organism>
<name>STCP_EMENI</name>
<comment type="function">
    <text evidence="2 4 5 7 8 9 10 11 14">Norsolorinic acid reductase; part of the gene cluster that mediates the biosynthesis of sterigmatocystin (ST), a polyketide-derived furanocoumarin which is part of the most toxic and carcinogenic compounds among the known mycotoxins (PubMed:8643646). The first step in the biosynthesis of sterigmatocystin is the production of hexanoate by the fatty acid synthase (FAS) units stcJ and stcK (PubMed:8962148). The polyketide backbone is assembled by the non-reducing polyketide synthase stcA by condensation of the starter hexanoyl-CoA and 7 malonyl-CoA extender units followed by cyclization and release of norsolorinic acid (By similarity). Norsolorinic acid is the first stable intermediate in the biosynthesis of sterigmatocystin and is converted into averantin (AVN) by the ketoreductase stcE which reduces the hexanoate ketone to an alcohol (Probable) (PubMed:8643646). Averantin is then oxidized into 5'-hydroxyaverantin (HAVN) by the cytochrome P450 monooxygenase stcF (PubMed:10618248). 5'-hydroxyaverantin is further converted to 5'-oxyaverantin (OAVN) by the 5'-hydroxyaverantin dehydrogenase stcG (PubMed:24957370). The next step is the conversion of OAVN into averufin (AVF) which is catalyzed by a yet to be identified enzyme (PubMed:24957370). The cytochrome P450 monooxygenase stcB and the flavin-binding monooxygenase stcW are both required for the conversion of averufin to 1-hydroxyversicolorone (PubMed:10618248). The esterase stcI probably catalyzes the formation of versiconal hemiacetal acetate from 1-hydroxyversicolorone (PubMed:24957370). The oxydoreductase stcN then probably catalyzes the biosynthetic step from versiconal to versicolorin B (VERB) (PubMed:24957370). The next step is performed by the versicolorin B desaturase stcL to produce versicolorin A (VERA) (PubMed:8999832). The ketoreductase stcU and the cytochrome P450 monooxygenase stcS are involved in the conversion of versicolorin A to demethylsterigmatocystin (PubMed:7486998). The Baeyer-Villiger oxidas stcQ and the reductase stcR might be involved in the biosynthetic step from versicolorin A to demethylsterigmatocystin (PubMed:24957370). The final step in the biosynthesis of sterigmatocystin is the methylation of demethylsterigmatocystin catalyzed by the methyltransferase stcP (PubMed:8900026).</text>
</comment>
<comment type="catalytic activity">
    <reaction evidence="15">
        <text>6-demethylsterigmatocystin + S-adenosyl-L-methionine = sterigmatocystin + S-adenosyl-L-homocysteine + H(+)</text>
        <dbReference type="Rhea" id="RHEA:11504"/>
        <dbReference type="ChEBI" id="CHEBI:15378"/>
        <dbReference type="ChEBI" id="CHEBI:18227"/>
        <dbReference type="ChEBI" id="CHEBI:18236"/>
        <dbReference type="ChEBI" id="CHEBI:57856"/>
        <dbReference type="ChEBI" id="CHEBI:59789"/>
        <dbReference type="EC" id="2.1.1.109"/>
    </reaction>
</comment>
<comment type="pathway">
    <text evidence="7 8">Mycotoxin biosynthesis; sterigmatocystin biosynthesis.</text>
</comment>
<comment type="induction">
    <text evidence="6 7">The genes forming the sterigmatocystin biosynthesis cluster are co-regulated and induced on oatmeal porridge or the fungal isolates were grown either on oatmeal porridge or in YEC medium (0.2% yeast extract, 5.0% corn steep liquor).</text>
</comment>
<comment type="disruption phenotype">
    <text evidence="8">Impairs the production of sterigmatocystin and leads to the accumulation of demethylsterigmatocystin.</text>
</comment>
<comment type="similarity">
    <text evidence="3">Belongs to the class I-like SAM-binding methyltransferase superfamily. Cation-independent O-methyltransferase family.</text>
</comment>
<protein>
    <recommendedName>
        <fullName evidence="13">Demethylsterigmatocystin 6-O-methyltransferase stcP</fullName>
        <ecNumber evidence="15">2.1.1.109</ecNumber>
    </recommendedName>
    <alternativeName>
        <fullName evidence="12">Sterigmatocystin biosynthesis cluster protein P</fullName>
    </alternativeName>
</protein>
<sequence>MPQHPKHMKSLGHLMALQRPTVWVDHFPVLEQLGEPPNPDKTLMVDIGGGFGQQSKALRSRCPNVEGKIIVQDMPQTLASAEPAEGVEFSEHDFFQPQPVKGAKFYYLRHVLHDWPDEQCVQILQQVIPAMAPESRILIDEVVIPVTGVPWQAAFMDLLMMESFASIERTRAEWEALMDKAGLKIIEEYYYDGKEQAILVVIPK</sequence>
<evidence type="ECO:0000250" key="1">
    <source>
        <dbReference type="UniProtKB" id="O04385"/>
    </source>
</evidence>
<evidence type="ECO:0000250" key="2">
    <source>
        <dbReference type="UniProtKB" id="Q12053"/>
    </source>
</evidence>
<evidence type="ECO:0000255" key="3">
    <source>
        <dbReference type="PROSITE-ProRule" id="PRU01020"/>
    </source>
</evidence>
<evidence type="ECO:0000269" key="4">
    <source>
    </source>
</evidence>
<evidence type="ECO:0000269" key="5">
    <source>
    </source>
</evidence>
<evidence type="ECO:0000269" key="6">
    <source>
    </source>
</evidence>
<evidence type="ECO:0000269" key="7">
    <source>
    </source>
</evidence>
<evidence type="ECO:0000269" key="8">
    <source>
    </source>
</evidence>
<evidence type="ECO:0000269" key="9">
    <source>
    </source>
</evidence>
<evidence type="ECO:0000269" key="10">
    <source>
    </source>
</evidence>
<evidence type="ECO:0000303" key="11">
    <source>
    </source>
</evidence>
<evidence type="ECO:0000303" key="12">
    <source>
    </source>
</evidence>
<evidence type="ECO:0000303" key="13">
    <source>
    </source>
</evidence>
<evidence type="ECO:0000305" key="14">
    <source>
    </source>
</evidence>
<evidence type="ECO:0000305" key="15">
    <source>
    </source>
</evidence>
<feature type="chain" id="PRO_0000455266" description="Demethylsterigmatocystin 6-O-methyltransferase stcP">
    <location>
        <begin position="1"/>
        <end position="204"/>
    </location>
</feature>
<feature type="active site" description="Proton acceptor" evidence="3">
    <location>
        <position position="113"/>
    </location>
</feature>
<feature type="binding site" evidence="1">
    <location>
        <begin position="48"/>
        <end position="49"/>
    </location>
    <ligand>
        <name>S-adenosyl-L-methionine</name>
        <dbReference type="ChEBI" id="CHEBI:59789"/>
    </ligand>
</feature>
<feature type="binding site" evidence="3">
    <location>
        <position position="73"/>
    </location>
    <ligand>
        <name>S-adenosyl-L-methionine</name>
        <dbReference type="ChEBI" id="CHEBI:59789"/>
    </ligand>
</feature>
<feature type="binding site" evidence="1">
    <location>
        <begin position="93"/>
        <end position="94"/>
    </location>
    <ligand>
        <name>S-adenosyl-L-methionine</name>
        <dbReference type="ChEBI" id="CHEBI:59789"/>
    </ligand>
</feature>
<feature type="binding site" evidence="1">
    <location>
        <position position="109"/>
    </location>
    <ligand>
        <name>S-adenosyl-L-methionine</name>
        <dbReference type="ChEBI" id="CHEBI:59789"/>
    </ligand>
</feature>